<feature type="chain" id="PRO_0000142675" description="Nucleoprotein">
    <location>
        <begin position="1"/>
        <end position="393"/>
    </location>
</feature>
<feature type="sequence variant" description="In strain: Non-pathogenic 15.">
    <original>R</original>
    <variation>K</variation>
    <location>
        <position position="234"/>
    </location>
</feature>
<reference key="1">
    <citation type="journal article" date="1991" name="J. Gen. Virol.">
        <title>Sequence of the major nucleocapsid protein gene of pneumonia virus of mice: sequence comparisons suggest structural homology between nucleocapsid proteins of pneumoviruses, paramyxoviruses, rhabdoviruses and filoviruses.</title>
        <authorList>
            <person name="Barr J."/>
            <person name="Chambers P."/>
            <person name="Pringle C.R."/>
            <person name="Easton A.J."/>
        </authorList>
    </citation>
    <scope>NUCLEOTIDE SEQUENCE [GENOMIC RNA]</scope>
    <source>
        <strain>Non-pathogenic 15</strain>
    </source>
</reference>
<reference key="2">
    <citation type="journal article" date="2005" name="J. Gen. Virol.">
        <title>Genome sequence of the non-pathogenic strain 15 of pneumonia virus of mice and comparison with the genome of the pathogenic strain J3666.</title>
        <authorList>
            <person name="Thorpe L.C."/>
            <person name="Easton A.J."/>
        </authorList>
    </citation>
    <scope>NUCLEOTIDE SEQUENCE [GENOMIC RNA]</scope>
</reference>
<reference key="3">
    <citation type="journal article" date="2003" name="J. Gen. Virol.">
        <title>Chimeric pneumovirus nucleocapsid (N) proteins allow identification of amino acids essential for the function of the respiratory syncytial virus N protein.</title>
        <authorList>
            <person name="Stokes H.L."/>
            <person name="Easton A.J."/>
            <person name="Marriott A.C."/>
        </authorList>
    </citation>
    <scope>INTERACTION WITH P PROTEIN</scope>
</reference>
<accession>P26589</accession>
<accession>Q5MKM8</accession>
<protein>
    <recommendedName>
        <fullName>Nucleoprotein</fullName>
    </recommendedName>
    <alternativeName>
        <fullName>Nucleocapsid protein</fullName>
        <shortName>NP</shortName>
        <shortName>Protein N</shortName>
    </alternativeName>
</protein>
<proteinExistence type="evidence at protein level"/>
<organismHost>
    <name type="scientific">Mus musculus</name>
    <name type="common">Mouse</name>
    <dbReference type="NCBI Taxonomy" id="10090"/>
</organismHost>
<name>NCAP_MPV15</name>
<evidence type="ECO:0000250" key="1">
    <source>
        <dbReference type="UniProtKB" id="P03418"/>
    </source>
</evidence>
<evidence type="ECO:0000305" key="2"/>
<comment type="function">
    <text evidence="1">Encapsidates the viral RNA genome by forming a left-handed helical nucleocapsid that protects the RNA from nucleases. RNA replication depends on the availability of soluble nucleoprotein. The encapsidated genomic RNA is termed the NC and serves as template for transcription and replication.</text>
</comment>
<comment type="subunit">
    <text evidence="1">Homomultimerizes to form the nucleocapsid. Interacts with the phosphoprotein P. When in a monomeric RNA-free form, interacts with the phosphoprotein (via N-terminus). Interacts with protein M2-1; this interaction allows the association of nucleocapsid with the matrix protein.</text>
</comment>
<comment type="subcellular location">
    <subcellularLocation>
        <location evidence="1">Virion</location>
    </subcellularLocation>
    <subcellularLocation>
        <location evidence="1">Host cytoplasm</location>
    </subcellularLocation>
    <text evidence="1">Localizes in cytoplasmic inclusion bodies.</text>
</comment>
<comment type="similarity">
    <text evidence="2">Belongs to the paramyxoviruses nucleocapsid family.</text>
</comment>
<sequence length="393" mass="43135">MSLDRLKLNDVSNKDSLLSNCKYSVTRSTGDVTSVSGHAMQKALARTLGMFLLTAFNRCEEVAEIGLQYAMSLLGRDDSIKILREAGYNVKCVDTQLKDFTIKLQGKEYKIQVLDIVGIDAANLADLEIQARGVVAKELKTGARLPDNRRHDAPDCGVIVLCIAALVVSKLAAGDRGGLDAVERRALNVLKAEKARYPNMEVKQIAESFYDLFERKPYYIDVFITFGLAQSSVRGGSKVEGLFSGLFMNAYGAGQVMLRWGLLAKSVKNIMLGHASVQAEMEQVVEVYEYAQKQGGEAGFYHIRNNPKASLLSLTNCPNFTSVVLGNAAGLGIIGSYKGAPRNRELFDAAKDYAERLKDNNVINYSALNLTAEERELISQQLNIVDDTPDDDI</sequence>
<dbReference type="EMBL" id="AY743910">
    <property type="protein sequence ID" value="AAW02834.1"/>
    <property type="molecule type" value="Genomic_RNA"/>
</dbReference>
<dbReference type="PIR" id="A38474">
    <property type="entry name" value="VHNZPM"/>
</dbReference>
<dbReference type="SMR" id="P26589"/>
<dbReference type="Proteomes" id="UP000133604">
    <property type="component" value="Genome"/>
</dbReference>
<dbReference type="GO" id="GO:0019029">
    <property type="term" value="C:helical viral capsid"/>
    <property type="evidence" value="ECO:0007669"/>
    <property type="project" value="UniProtKB-KW"/>
</dbReference>
<dbReference type="GO" id="GO:0030430">
    <property type="term" value="C:host cell cytoplasm"/>
    <property type="evidence" value="ECO:0007669"/>
    <property type="project" value="UniProtKB-SubCell"/>
</dbReference>
<dbReference type="GO" id="GO:1990904">
    <property type="term" value="C:ribonucleoprotein complex"/>
    <property type="evidence" value="ECO:0007669"/>
    <property type="project" value="UniProtKB-KW"/>
</dbReference>
<dbReference type="GO" id="GO:0019013">
    <property type="term" value="C:viral nucleocapsid"/>
    <property type="evidence" value="ECO:0007669"/>
    <property type="project" value="UniProtKB-KW"/>
</dbReference>
<dbReference type="GO" id="GO:0030291">
    <property type="term" value="F:protein serine/threonine kinase inhibitor activity"/>
    <property type="evidence" value="ECO:0007669"/>
    <property type="project" value="UniProtKB-KW"/>
</dbReference>
<dbReference type="GO" id="GO:0003723">
    <property type="term" value="F:RNA binding"/>
    <property type="evidence" value="ECO:0007669"/>
    <property type="project" value="UniProtKB-KW"/>
</dbReference>
<dbReference type="GO" id="GO:0052170">
    <property type="term" value="P:symbiont-mediated suppression of host innate immune response"/>
    <property type="evidence" value="ECO:0007669"/>
    <property type="project" value="UniProtKB-KW"/>
</dbReference>
<dbReference type="GO" id="GO:0039580">
    <property type="term" value="P:symbiont-mediated suppression of host PKR/eIFalpha signaling"/>
    <property type="evidence" value="ECO:0007669"/>
    <property type="project" value="UniProtKB-KW"/>
</dbReference>
<dbReference type="GO" id="GO:0039502">
    <property type="term" value="P:symbiont-mediated suppression of host type I interferon-mediated signaling pathway"/>
    <property type="evidence" value="ECO:0007669"/>
    <property type="project" value="UniProtKB-KW"/>
</dbReference>
<dbReference type="InterPro" id="IPR004930">
    <property type="entry name" value="Pneumo_ncap"/>
</dbReference>
<dbReference type="Pfam" id="PF03246">
    <property type="entry name" value="Pneumo_ncap"/>
    <property type="match status" value="1"/>
</dbReference>
<keyword id="KW-0167">Capsid protein</keyword>
<keyword id="KW-1139">Helical capsid protein</keyword>
<keyword id="KW-1035">Host cytoplasm</keyword>
<keyword id="KW-0945">Host-virus interaction</keyword>
<keyword id="KW-1090">Inhibition of host innate immune response by virus</keyword>
<keyword id="KW-1114">Inhibition of host interferon signaling pathway by virus</keyword>
<keyword id="KW-1102">Inhibition of host PKR by virus</keyword>
<keyword id="KW-0922">Interferon antiviral system evasion</keyword>
<keyword id="KW-1185">Reference proteome</keyword>
<keyword id="KW-0687">Ribonucleoprotein</keyword>
<keyword id="KW-0694">RNA-binding</keyword>
<keyword id="KW-0899">Viral immunoevasion</keyword>
<keyword id="KW-0543">Viral nucleoprotein</keyword>
<keyword id="KW-0946">Virion</keyword>
<gene>
    <name type="primary">N</name>
    <name type="synonym">NP</name>
</gene>
<organism>
    <name type="scientific">Murine pneumonia virus (strain 15)</name>
    <name type="common">MPV</name>
    <dbReference type="NCBI Taxonomy" id="296738"/>
    <lineage>
        <taxon>Viruses</taxon>
        <taxon>Riboviria</taxon>
        <taxon>Orthornavirae</taxon>
        <taxon>Negarnaviricota</taxon>
        <taxon>Haploviricotina</taxon>
        <taxon>Monjiviricetes</taxon>
        <taxon>Mononegavirales</taxon>
        <taxon>Pneumoviridae</taxon>
        <taxon>Orthopneumovirus</taxon>
        <taxon>Orthopneumovirus muris</taxon>
        <taxon>murine pneumonia virus</taxon>
    </lineage>
</organism>